<evidence type="ECO:0000255" key="1"/>
<evidence type="ECO:0000305" key="2"/>
<sequence length="53" mass="5567">MNQGKIWTVVNPAVGLPLLLGSVAITALLVHLAVLTHTTWFPAFTQGGLKKAA</sequence>
<dbReference type="SMR" id="P35090"/>
<dbReference type="GO" id="GO:0019866">
    <property type="term" value="C:organelle inner membrane"/>
    <property type="evidence" value="ECO:0007669"/>
    <property type="project" value="InterPro"/>
</dbReference>
<dbReference type="GO" id="GO:0005886">
    <property type="term" value="C:plasma membrane"/>
    <property type="evidence" value="ECO:0007669"/>
    <property type="project" value="UniProtKB-SubCell"/>
</dbReference>
<dbReference type="GO" id="GO:0030077">
    <property type="term" value="C:plasma membrane light-harvesting complex"/>
    <property type="evidence" value="ECO:0007669"/>
    <property type="project" value="InterPro"/>
</dbReference>
<dbReference type="GO" id="GO:0042314">
    <property type="term" value="F:bacteriochlorophyll binding"/>
    <property type="evidence" value="ECO:0007669"/>
    <property type="project" value="UniProtKB-KW"/>
</dbReference>
<dbReference type="GO" id="GO:0045156">
    <property type="term" value="F:electron transporter, transferring electrons within the cyclic electron transport pathway of photosynthesis activity"/>
    <property type="evidence" value="ECO:0007669"/>
    <property type="project" value="InterPro"/>
</dbReference>
<dbReference type="GO" id="GO:0046872">
    <property type="term" value="F:metal ion binding"/>
    <property type="evidence" value="ECO:0007669"/>
    <property type="project" value="UniProtKB-KW"/>
</dbReference>
<dbReference type="GO" id="GO:0019684">
    <property type="term" value="P:photosynthesis, light reaction"/>
    <property type="evidence" value="ECO:0007669"/>
    <property type="project" value="InterPro"/>
</dbReference>
<dbReference type="Gene3D" id="4.10.220.20">
    <property type="entry name" value="Light-harvesting complex"/>
    <property type="match status" value="1"/>
</dbReference>
<dbReference type="InterPro" id="IPR000066">
    <property type="entry name" value="Antenna_a/b"/>
</dbReference>
<dbReference type="InterPro" id="IPR018332">
    <property type="entry name" value="Antenna_alpha"/>
</dbReference>
<dbReference type="InterPro" id="IPR002361">
    <property type="entry name" value="Antenna_alpha_CS"/>
</dbReference>
<dbReference type="InterPro" id="IPR035889">
    <property type="entry name" value="Light-harvesting_complex"/>
</dbReference>
<dbReference type="Pfam" id="PF00556">
    <property type="entry name" value="LHC"/>
    <property type="match status" value="1"/>
</dbReference>
<dbReference type="PRINTS" id="PR00673">
    <property type="entry name" value="LIGHTHARVSTA"/>
</dbReference>
<dbReference type="SUPFAM" id="SSF56918">
    <property type="entry name" value="Light-harvesting complex subunits"/>
    <property type="match status" value="1"/>
</dbReference>
<dbReference type="PROSITE" id="PS00968">
    <property type="entry name" value="ANTENNA_COMP_ALPHA"/>
    <property type="match status" value="1"/>
</dbReference>
<proteinExistence type="evidence at protein level"/>
<comment type="function">
    <text>Antenna complexes are light-harvesting systems, which transfer the excitation energy to the reaction centers.</text>
</comment>
<comment type="subunit">
    <text>The core complex is formed by different alpha and beta chains, binding bacteriochlorophyll molecules, and arranged most probably in tetrameric structures disposed around the reaction center. The non-pigmented gamma chains may constitute additional components.</text>
</comment>
<comment type="subcellular location">
    <subcellularLocation>
        <location>Cell inner membrane</location>
        <topology>Single-pass type II membrane protein</topology>
    </subcellularLocation>
</comment>
<comment type="similarity">
    <text evidence="2">Belongs to the antenna complex alpha subunit family.</text>
</comment>
<name>LHA2_RHOAC</name>
<organism>
    <name type="scientific">Rhodoblastus acidophilus</name>
    <name type="common">Rhodopseudomonas acidophila</name>
    <dbReference type="NCBI Taxonomy" id="1074"/>
    <lineage>
        <taxon>Bacteria</taxon>
        <taxon>Pseudomonadati</taxon>
        <taxon>Pseudomonadota</taxon>
        <taxon>Alphaproteobacteria</taxon>
        <taxon>Hyphomicrobiales</taxon>
        <taxon>Rhodoblastaceae</taxon>
        <taxon>Rhodoblastus</taxon>
    </lineage>
</organism>
<protein>
    <recommendedName>
        <fullName>Light-harvesting protein B-800/820 alpha chain</fullName>
    </recommendedName>
    <alternativeName>
        <fullName>Antenna pigment protein alpha chain</fullName>
    </alternativeName>
</protein>
<keyword id="KW-0042">Antenna complex</keyword>
<keyword id="KW-0076">Bacteriochlorophyll</keyword>
<keyword id="KW-0997">Cell inner membrane</keyword>
<keyword id="KW-1003">Cell membrane</keyword>
<keyword id="KW-0148">Chlorophyll</keyword>
<keyword id="KW-0157">Chromophore</keyword>
<keyword id="KW-0903">Direct protein sequencing</keyword>
<keyword id="KW-0437">Light-harvesting polypeptide</keyword>
<keyword id="KW-0460">Magnesium</keyword>
<keyword id="KW-0472">Membrane</keyword>
<keyword id="KW-0479">Metal-binding</keyword>
<keyword id="KW-0812">Transmembrane</keyword>
<keyword id="KW-1133">Transmembrane helix</keyword>
<accession>P35090</accession>
<reference key="1">
    <citation type="book" date="1987" name="Progress in photosynthesis research">
        <editorList>
            <person name="Biggins J."/>
        </editorList>
        <authorList>
            <person name="Brunisholz R.A."/>
            <person name="Bissig I."/>
            <person name="Niederer E."/>
            <person name="Suter F."/>
            <person name="Zuber H."/>
        </authorList>
    </citation>
    <scope>PROTEIN SEQUENCE</scope>
    <source>
        <strain>DSM 141 / 7750 / LMG 4302</strain>
    </source>
</reference>
<feature type="chain" id="PRO_0000099785" description="Light-harvesting protein B-800/820 alpha chain">
    <location>
        <begin position="1"/>
        <end position="53"/>
    </location>
</feature>
<feature type="topological domain" description="Cytoplasmic" evidence="1">
    <location>
        <begin position="1"/>
        <end position="14"/>
    </location>
</feature>
<feature type="transmembrane region" description="Helical" evidence="1">
    <location>
        <begin position="15"/>
        <end position="35"/>
    </location>
</feature>
<feature type="topological domain" description="Periplasmic" evidence="1">
    <location>
        <begin position="36"/>
        <end position="53"/>
    </location>
</feature>
<feature type="binding site" description="axial binding residue" evidence="1">
    <location>
        <position position="31"/>
    </location>
    <ligand>
        <name>a bacteriochlorophyll</name>
        <dbReference type="ChEBI" id="CHEBI:38201"/>
    </ligand>
    <ligandPart>
        <name>Mg</name>
        <dbReference type="ChEBI" id="CHEBI:25107"/>
    </ligandPart>
</feature>